<gene>
    <name evidence="1" type="primary">purM</name>
    <name type="ordered locus">PputGB1_1263</name>
</gene>
<reference key="1">
    <citation type="submission" date="2008-01" db="EMBL/GenBank/DDBJ databases">
        <title>Complete sequence of Pseudomonas putida GB-1.</title>
        <authorList>
            <consortium name="US DOE Joint Genome Institute"/>
            <person name="Copeland A."/>
            <person name="Lucas S."/>
            <person name="Lapidus A."/>
            <person name="Barry K."/>
            <person name="Glavina del Rio T."/>
            <person name="Dalin E."/>
            <person name="Tice H."/>
            <person name="Pitluck S."/>
            <person name="Bruce D."/>
            <person name="Goodwin L."/>
            <person name="Chertkov O."/>
            <person name="Brettin T."/>
            <person name="Detter J.C."/>
            <person name="Han C."/>
            <person name="Kuske C.R."/>
            <person name="Schmutz J."/>
            <person name="Larimer F."/>
            <person name="Land M."/>
            <person name="Hauser L."/>
            <person name="Kyrpides N."/>
            <person name="Kim E."/>
            <person name="McCarthy J.K."/>
            <person name="Richardson P."/>
        </authorList>
    </citation>
    <scope>NUCLEOTIDE SEQUENCE [LARGE SCALE GENOMIC DNA]</scope>
    <source>
        <strain>GB-1</strain>
    </source>
</reference>
<comment type="catalytic activity">
    <reaction evidence="1">
        <text>2-formamido-N(1)-(5-O-phospho-beta-D-ribosyl)acetamidine + ATP = 5-amino-1-(5-phospho-beta-D-ribosyl)imidazole + ADP + phosphate + H(+)</text>
        <dbReference type="Rhea" id="RHEA:23032"/>
        <dbReference type="ChEBI" id="CHEBI:15378"/>
        <dbReference type="ChEBI" id="CHEBI:30616"/>
        <dbReference type="ChEBI" id="CHEBI:43474"/>
        <dbReference type="ChEBI" id="CHEBI:137981"/>
        <dbReference type="ChEBI" id="CHEBI:147287"/>
        <dbReference type="ChEBI" id="CHEBI:456216"/>
        <dbReference type="EC" id="6.3.3.1"/>
    </reaction>
</comment>
<comment type="pathway">
    <text evidence="1">Purine metabolism; IMP biosynthesis via de novo pathway; 5-amino-1-(5-phospho-D-ribosyl)imidazole from N(2)-formyl-N(1)-(5-phospho-D-ribosyl)glycinamide: step 2/2.</text>
</comment>
<comment type="subcellular location">
    <subcellularLocation>
        <location evidence="1">Cytoplasm</location>
    </subcellularLocation>
</comment>
<comment type="similarity">
    <text evidence="1">Belongs to the AIR synthase family.</text>
</comment>
<feature type="chain" id="PRO_1000083463" description="Phosphoribosylformylglycinamidine cyclo-ligase">
    <location>
        <begin position="1"/>
        <end position="352"/>
    </location>
</feature>
<proteinExistence type="inferred from homology"/>
<name>PUR5_PSEPG</name>
<dbReference type="EC" id="6.3.3.1" evidence="1"/>
<dbReference type="EMBL" id="CP000926">
    <property type="protein sequence ID" value="ABY97170.1"/>
    <property type="molecule type" value="Genomic_DNA"/>
</dbReference>
<dbReference type="RefSeq" id="WP_003252437.1">
    <property type="nucleotide sequence ID" value="NC_010322.1"/>
</dbReference>
<dbReference type="SMR" id="B0KT52"/>
<dbReference type="GeneID" id="83681857"/>
<dbReference type="KEGG" id="ppg:PputGB1_1263"/>
<dbReference type="eggNOG" id="COG0150">
    <property type="taxonomic scope" value="Bacteria"/>
</dbReference>
<dbReference type="HOGENOM" id="CLU_047116_0_0_6"/>
<dbReference type="UniPathway" id="UPA00074">
    <property type="reaction ID" value="UER00129"/>
</dbReference>
<dbReference type="Proteomes" id="UP000002157">
    <property type="component" value="Chromosome"/>
</dbReference>
<dbReference type="GO" id="GO:0005829">
    <property type="term" value="C:cytosol"/>
    <property type="evidence" value="ECO:0007669"/>
    <property type="project" value="TreeGrafter"/>
</dbReference>
<dbReference type="GO" id="GO:0005524">
    <property type="term" value="F:ATP binding"/>
    <property type="evidence" value="ECO:0007669"/>
    <property type="project" value="UniProtKB-KW"/>
</dbReference>
<dbReference type="GO" id="GO:0004637">
    <property type="term" value="F:phosphoribosylamine-glycine ligase activity"/>
    <property type="evidence" value="ECO:0007669"/>
    <property type="project" value="TreeGrafter"/>
</dbReference>
<dbReference type="GO" id="GO:0004641">
    <property type="term" value="F:phosphoribosylformylglycinamidine cyclo-ligase activity"/>
    <property type="evidence" value="ECO:0007669"/>
    <property type="project" value="UniProtKB-UniRule"/>
</dbReference>
<dbReference type="GO" id="GO:0006189">
    <property type="term" value="P:'de novo' IMP biosynthetic process"/>
    <property type="evidence" value="ECO:0007669"/>
    <property type="project" value="UniProtKB-UniRule"/>
</dbReference>
<dbReference type="GO" id="GO:0046084">
    <property type="term" value="P:adenine biosynthetic process"/>
    <property type="evidence" value="ECO:0007669"/>
    <property type="project" value="TreeGrafter"/>
</dbReference>
<dbReference type="CDD" id="cd02196">
    <property type="entry name" value="PurM"/>
    <property type="match status" value="1"/>
</dbReference>
<dbReference type="FunFam" id="3.30.1330.10:FF:000001">
    <property type="entry name" value="Phosphoribosylformylglycinamidine cyclo-ligase"/>
    <property type="match status" value="1"/>
</dbReference>
<dbReference type="FunFam" id="3.90.650.10:FF:000001">
    <property type="entry name" value="Phosphoribosylformylglycinamidine cyclo-ligase"/>
    <property type="match status" value="1"/>
</dbReference>
<dbReference type="Gene3D" id="3.90.650.10">
    <property type="entry name" value="PurM-like C-terminal domain"/>
    <property type="match status" value="1"/>
</dbReference>
<dbReference type="Gene3D" id="3.30.1330.10">
    <property type="entry name" value="PurM-like, N-terminal domain"/>
    <property type="match status" value="1"/>
</dbReference>
<dbReference type="HAMAP" id="MF_00741">
    <property type="entry name" value="AIRS"/>
    <property type="match status" value="1"/>
</dbReference>
<dbReference type="InterPro" id="IPR010918">
    <property type="entry name" value="PurM-like_C_dom"/>
</dbReference>
<dbReference type="InterPro" id="IPR036676">
    <property type="entry name" value="PurM-like_C_sf"/>
</dbReference>
<dbReference type="InterPro" id="IPR016188">
    <property type="entry name" value="PurM-like_N"/>
</dbReference>
<dbReference type="InterPro" id="IPR036921">
    <property type="entry name" value="PurM-like_N_sf"/>
</dbReference>
<dbReference type="InterPro" id="IPR004733">
    <property type="entry name" value="PurM_cligase"/>
</dbReference>
<dbReference type="NCBIfam" id="TIGR00878">
    <property type="entry name" value="purM"/>
    <property type="match status" value="1"/>
</dbReference>
<dbReference type="PANTHER" id="PTHR10520:SF12">
    <property type="entry name" value="TRIFUNCTIONAL PURINE BIOSYNTHETIC PROTEIN ADENOSINE-3"/>
    <property type="match status" value="1"/>
</dbReference>
<dbReference type="PANTHER" id="PTHR10520">
    <property type="entry name" value="TRIFUNCTIONAL PURINE BIOSYNTHETIC PROTEIN ADENOSINE-3-RELATED"/>
    <property type="match status" value="1"/>
</dbReference>
<dbReference type="Pfam" id="PF00586">
    <property type="entry name" value="AIRS"/>
    <property type="match status" value="1"/>
</dbReference>
<dbReference type="Pfam" id="PF02769">
    <property type="entry name" value="AIRS_C"/>
    <property type="match status" value="1"/>
</dbReference>
<dbReference type="SUPFAM" id="SSF56042">
    <property type="entry name" value="PurM C-terminal domain-like"/>
    <property type="match status" value="1"/>
</dbReference>
<dbReference type="SUPFAM" id="SSF55326">
    <property type="entry name" value="PurM N-terminal domain-like"/>
    <property type="match status" value="1"/>
</dbReference>
<evidence type="ECO:0000255" key="1">
    <source>
        <dbReference type="HAMAP-Rule" id="MF_00741"/>
    </source>
</evidence>
<sequence length="352" mass="36942">MSKQPSLSYKDAGVDIDAGEALVERIKGVAKRTARPEVMGGLGGFGALCEIPAGYKQPVLVSGTDGVGTKLRLALNLNKHDSIGQDLVAMCVNDLVVCGAEPLFFLDYYATGKLNVDVAATVVTGIGAGCELAGCSLVGGETAEMPGMYEGEDYDLAGFCVGVVEKAEIIDGSKVATGDALIALPSSGPHSNGYSLIRKILEVSATDIENTQLDGKPLTDLLMAPTRIYVKPLLQLIKNTGAVKAMAHITGGGLLDNIPRVLPKNAQAVVDVASWQRPAVFDFLQEKGNVDEHEMHRVLNCGVGMVICVAQDQVEAALNELRAAGEQPWVIGHIAEAAEGAAQVELQNLKAH</sequence>
<keyword id="KW-0067">ATP-binding</keyword>
<keyword id="KW-0963">Cytoplasm</keyword>
<keyword id="KW-0436">Ligase</keyword>
<keyword id="KW-0547">Nucleotide-binding</keyword>
<keyword id="KW-0658">Purine biosynthesis</keyword>
<protein>
    <recommendedName>
        <fullName evidence="1">Phosphoribosylformylglycinamidine cyclo-ligase</fullName>
        <ecNumber evidence="1">6.3.3.1</ecNumber>
    </recommendedName>
    <alternativeName>
        <fullName evidence="1">AIR synthase</fullName>
    </alternativeName>
    <alternativeName>
        <fullName evidence="1">AIRS</fullName>
    </alternativeName>
    <alternativeName>
        <fullName evidence="1">Phosphoribosyl-aminoimidazole synthetase</fullName>
    </alternativeName>
</protein>
<accession>B0KT52</accession>
<organism>
    <name type="scientific">Pseudomonas putida (strain GB-1)</name>
    <dbReference type="NCBI Taxonomy" id="76869"/>
    <lineage>
        <taxon>Bacteria</taxon>
        <taxon>Pseudomonadati</taxon>
        <taxon>Pseudomonadota</taxon>
        <taxon>Gammaproteobacteria</taxon>
        <taxon>Pseudomonadales</taxon>
        <taxon>Pseudomonadaceae</taxon>
        <taxon>Pseudomonas</taxon>
    </lineage>
</organism>